<accession>O42357</accession>
<evidence type="ECO:0000250" key="1"/>
<evidence type="ECO:0000255" key="2"/>
<evidence type="ECO:0000255" key="3">
    <source>
        <dbReference type="PROSITE-ProRule" id="PRU00108"/>
    </source>
</evidence>
<evidence type="ECO:0000255" key="4">
    <source>
        <dbReference type="PROSITE-ProRule" id="PRU00138"/>
    </source>
</evidence>
<evidence type="ECO:0000256" key="5">
    <source>
        <dbReference type="SAM" id="MobiDB-lite"/>
    </source>
</evidence>
<evidence type="ECO:0000305" key="6"/>
<comment type="function">
    <text evidence="1">Plays a critical role in eye formation by regulating the initial specification of retinal cells and/or their subsequent proliferation.</text>
</comment>
<comment type="subcellular location">
    <subcellularLocation>
        <location evidence="3 4">Nucleus</location>
    </subcellularLocation>
</comment>
<comment type="tissue specificity">
    <text>Expressed in the outer nuclear layer, in cone photoreceptor.</text>
</comment>
<comment type="developmental stage">
    <text>Expressed in the developing retina.</text>
</comment>
<comment type="similarity">
    <text evidence="6">Belongs to the paired homeobox family. Bicoid subfamily.</text>
</comment>
<feature type="chain" id="PRO_0000049284" description="Retinal homeobox protein Rx2">
    <location>
        <begin position="1"/>
        <end position="327"/>
    </location>
</feature>
<feature type="DNA-binding region" description="Homeobox" evidence="3">
    <location>
        <begin position="135"/>
        <end position="194"/>
    </location>
</feature>
<feature type="region of interest" description="Disordered" evidence="5">
    <location>
        <begin position="48"/>
        <end position="73"/>
    </location>
</feature>
<feature type="region of interest" description="Disordered" evidence="5">
    <location>
        <begin position="100"/>
        <end position="139"/>
    </location>
</feature>
<feature type="short sequence motif" description="Octapeptide motif">
    <location>
        <begin position="37"/>
        <end position="44"/>
    </location>
</feature>
<feature type="short sequence motif" description="OAR" evidence="4">
    <location>
        <begin position="304"/>
        <end position="317"/>
    </location>
</feature>
<feature type="short sequence motif" description="Nuclear localization signal" evidence="2">
    <location>
        <begin position="310"/>
        <end position="314"/>
    </location>
</feature>
<feature type="compositionally biased region" description="Basic and acidic residues" evidence="5">
    <location>
        <begin position="56"/>
        <end position="73"/>
    </location>
</feature>
<feature type="compositionally biased region" description="Basic and acidic residues" evidence="5">
    <location>
        <begin position="103"/>
        <end position="124"/>
    </location>
</feature>
<organism>
    <name type="scientific">Danio rerio</name>
    <name type="common">Zebrafish</name>
    <name type="synonym">Brachydanio rerio</name>
    <dbReference type="NCBI Taxonomy" id="7955"/>
    <lineage>
        <taxon>Eukaryota</taxon>
        <taxon>Metazoa</taxon>
        <taxon>Chordata</taxon>
        <taxon>Craniata</taxon>
        <taxon>Vertebrata</taxon>
        <taxon>Euteleostomi</taxon>
        <taxon>Actinopterygii</taxon>
        <taxon>Neopterygii</taxon>
        <taxon>Teleostei</taxon>
        <taxon>Ostariophysi</taxon>
        <taxon>Cypriniformes</taxon>
        <taxon>Danionidae</taxon>
        <taxon>Danioninae</taxon>
        <taxon>Danio</taxon>
    </lineage>
</organism>
<gene>
    <name type="primary">rx2</name>
</gene>
<name>RX2_DANRE</name>
<keyword id="KW-0217">Developmental protein</keyword>
<keyword id="KW-0238">DNA-binding</keyword>
<keyword id="KW-0371">Homeobox</keyword>
<keyword id="KW-0539">Nucleus</keyword>
<keyword id="KW-1185">Reference proteome</keyword>
<keyword id="KW-0804">Transcription</keyword>
<keyword id="KW-0805">Transcription regulation</keyword>
<reference key="1">
    <citation type="journal article" date="1997" name="Nature">
        <title>The Rx homeobox gene is essential for vertebrate eye development.</title>
        <authorList>
            <person name="Mathers P.H."/>
            <person name="Grinberg A."/>
            <person name="Mahon K.A."/>
            <person name="Jamrich M."/>
        </authorList>
    </citation>
    <scope>NUCLEOTIDE SEQUENCE [MRNA]</scope>
    <source>
        <tissue>Embryo</tissue>
    </source>
</reference>
<proteinExistence type="evidence at transcript level"/>
<sequence>MHLSPDTMNMVDDGCLSTESYHDLGKGGVSGISGRVHSIDVILGFSKDQDPLLEPSGRHKVDEDQLEEQEKQVNADPYSHLQIPDQTQQQQSVYHDTGLFSTDKCDADLGDPRSNVESDSRSPDIPDEDQPKKKHRRNRTTFTTYQLHELERAFEKSHYPDVYSREELAMKVNLPEVRVQVWFQNRRAKWRRQEKMDTGTMKLHDSPIRSFNRPPMAPNVGPMSNSLPLDPWLSSPLSSATPMHSIPGFMGPGQSLQPTYTAHPGFLNTSPGMMQNIQPMPPPPYQCQPVFNDKYPLEDVDRSSSIAALRMKAKEHIQSMDKTWQPM</sequence>
<protein>
    <recommendedName>
        <fullName>Retinal homeobox protein Rx2</fullName>
    </recommendedName>
</protein>
<dbReference type="EMBL" id="AF001908">
    <property type="protein sequence ID" value="AAB62326.1"/>
    <property type="molecule type" value="mRNA"/>
</dbReference>
<dbReference type="SMR" id="O42357"/>
<dbReference type="FunCoup" id="O42357">
    <property type="interactions" value="30"/>
</dbReference>
<dbReference type="STRING" id="7955.ENSDARP00000059002"/>
<dbReference type="PaxDb" id="7955-ENSDARP00000105437"/>
<dbReference type="AGR" id="ZFIN:ZDB-GENE-990415-237"/>
<dbReference type="ZFIN" id="ZDB-GENE-990415-237">
    <property type="gene designation" value="rx2"/>
</dbReference>
<dbReference type="eggNOG" id="KOG0490">
    <property type="taxonomic scope" value="Eukaryota"/>
</dbReference>
<dbReference type="InParanoid" id="O42357"/>
<dbReference type="PhylomeDB" id="O42357"/>
<dbReference type="PRO" id="PR:O42357"/>
<dbReference type="Proteomes" id="UP000000437">
    <property type="component" value="Unplaced"/>
</dbReference>
<dbReference type="GO" id="GO:0005634">
    <property type="term" value="C:nucleus"/>
    <property type="evidence" value="ECO:0007669"/>
    <property type="project" value="UniProtKB-SubCell"/>
</dbReference>
<dbReference type="GO" id="GO:0000981">
    <property type="term" value="F:DNA-binding transcription factor activity, RNA polymerase II-specific"/>
    <property type="evidence" value="ECO:0000318"/>
    <property type="project" value="GO_Central"/>
</dbReference>
<dbReference type="GO" id="GO:0000978">
    <property type="term" value="F:RNA polymerase II cis-regulatory region sequence-specific DNA binding"/>
    <property type="evidence" value="ECO:0000318"/>
    <property type="project" value="GO_Central"/>
</dbReference>
<dbReference type="GO" id="GO:0060219">
    <property type="term" value="P:camera-type eye photoreceptor cell differentiation"/>
    <property type="evidence" value="ECO:0000316"/>
    <property type="project" value="ZFIN"/>
</dbReference>
<dbReference type="GO" id="GO:0045944">
    <property type="term" value="P:positive regulation of transcription by RNA polymerase II"/>
    <property type="evidence" value="ECO:0007669"/>
    <property type="project" value="InterPro"/>
</dbReference>
<dbReference type="GO" id="GO:0006357">
    <property type="term" value="P:regulation of transcription by RNA polymerase II"/>
    <property type="evidence" value="ECO:0000318"/>
    <property type="project" value="GO_Central"/>
</dbReference>
<dbReference type="CDD" id="cd00086">
    <property type="entry name" value="homeodomain"/>
    <property type="match status" value="1"/>
</dbReference>
<dbReference type="FunFam" id="1.10.10.60:FF:000071">
    <property type="entry name" value="Retinal homeobox gene 2"/>
    <property type="match status" value="1"/>
</dbReference>
<dbReference type="Gene3D" id="1.10.10.60">
    <property type="entry name" value="Homeodomain-like"/>
    <property type="match status" value="1"/>
</dbReference>
<dbReference type="InterPro" id="IPR001356">
    <property type="entry name" value="HD"/>
</dbReference>
<dbReference type="InterPro" id="IPR017970">
    <property type="entry name" value="Homeobox_CS"/>
</dbReference>
<dbReference type="InterPro" id="IPR009057">
    <property type="entry name" value="Homeodomain-like_sf"/>
</dbReference>
<dbReference type="InterPro" id="IPR003654">
    <property type="entry name" value="OAR_dom"/>
</dbReference>
<dbReference type="InterPro" id="IPR043562">
    <property type="entry name" value="RAX/RAX2"/>
</dbReference>
<dbReference type="PANTHER" id="PTHR46271">
    <property type="entry name" value="HOMEOBOX PROTEIN, PUTATIVE-RELATED"/>
    <property type="match status" value="1"/>
</dbReference>
<dbReference type="PANTHER" id="PTHR46271:SF2">
    <property type="entry name" value="RETINA AND ANTERIOR NEURAL FOLD HOMEOBOX PROTEIN 2"/>
    <property type="match status" value="1"/>
</dbReference>
<dbReference type="Pfam" id="PF00046">
    <property type="entry name" value="Homeodomain"/>
    <property type="match status" value="1"/>
</dbReference>
<dbReference type="Pfam" id="PF03826">
    <property type="entry name" value="OAR"/>
    <property type="match status" value="1"/>
</dbReference>
<dbReference type="SMART" id="SM00389">
    <property type="entry name" value="HOX"/>
    <property type="match status" value="1"/>
</dbReference>
<dbReference type="SUPFAM" id="SSF46689">
    <property type="entry name" value="Homeodomain-like"/>
    <property type="match status" value="1"/>
</dbReference>
<dbReference type="PROSITE" id="PS00027">
    <property type="entry name" value="HOMEOBOX_1"/>
    <property type="match status" value="1"/>
</dbReference>
<dbReference type="PROSITE" id="PS50071">
    <property type="entry name" value="HOMEOBOX_2"/>
    <property type="match status" value="1"/>
</dbReference>
<dbReference type="PROSITE" id="PS50803">
    <property type="entry name" value="OAR"/>
    <property type="match status" value="1"/>
</dbReference>